<sequence length="782" mass="83621">MADHDVHTAEAVIDNGSFGVRTVRFETGRLARQAGGSAVAYLGDTMVLSATTASKEPREQFDFFPLTVDVEERLYAAGRIPGSFFRREGRPSEEAILTCRLIDRPLRPSFVKGLRNEVQVVVTVLAVDPEHLYDVVAINAASMSTLLAGLPFSGPIGGVRMAHIDGTWVAFPTYSELERATFDMVVAGRVLPDGDVAIMMVEAEATEETIPLIREGAPAPTEEVVAGGLEAAKPFIRTLCAAQSELAARAAKPVTEFPLFRDYEDDVYDAVAATVRDDVARALTIAGKQEREAALDEVANTALGRLGERFAGREKEILAALRALTKKLVRERIIREKVRIDGRGLTDIRPLTAEVGIVPRVHGSALFERGETQILGVTTLNMLRMEQQLDTVSPRTKKRYMHHYNFPPYSTGEVGRVGSPKRREIGHGALAERALIPVLPSREEFPYAIRQVSEAIGSNGSTSMGSVCASTLSLLNAGVPLRAPVAGIAMGLISDTVDGETHYVTLTDILGAEDAYGDMDFKVAGTRDFVTALQLDTKLDGIPASVLAAALPQAREARLTILDVMAKAISEPAPMSPYAPRIITIKIPVDQIGAVIGPKGKIINQIQDDTGAEITIEDDGTIYIGATEGTAAEAARAAISAIANPQLPEVGERYLGTVVKATPFGVFVSLLPGKDGLLHISELRKMAGGRRVENVEDVLKVGDKIQVEIRDIDARGKLSLVPVDVPGAVLAEDAGAGESAASGGAPRSAGGPQPREHQGPGRPRGRGGDHGGEGRQRTRRRH</sequence>
<name>PNP_ACIC1</name>
<feature type="chain" id="PRO_0000329479" description="Polyribonucleotide nucleotidyltransferase">
    <location>
        <begin position="1"/>
        <end position="782"/>
    </location>
</feature>
<feature type="domain" description="KH" evidence="1">
    <location>
        <begin position="580"/>
        <end position="639"/>
    </location>
</feature>
<feature type="domain" description="S1 motif" evidence="1">
    <location>
        <begin position="651"/>
        <end position="723"/>
    </location>
</feature>
<feature type="region of interest" description="Disordered" evidence="2">
    <location>
        <begin position="734"/>
        <end position="782"/>
    </location>
</feature>
<feature type="compositionally biased region" description="Low complexity" evidence="2">
    <location>
        <begin position="734"/>
        <end position="753"/>
    </location>
</feature>
<feature type="compositionally biased region" description="Basic and acidic residues" evidence="2">
    <location>
        <begin position="766"/>
        <end position="776"/>
    </location>
</feature>
<feature type="binding site" evidence="1">
    <location>
        <position position="514"/>
    </location>
    <ligand>
        <name>Mg(2+)</name>
        <dbReference type="ChEBI" id="CHEBI:18420"/>
    </ligand>
</feature>
<feature type="binding site" evidence="1">
    <location>
        <position position="520"/>
    </location>
    <ligand>
        <name>Mg(2+)</name>
        <dbReference type="ChEBI" id="CHEBI:18420"/>
    </ligand>
</feature>
<evidence type="ECO:0000255" key="1">
    <source>
        <dbReference type="HAMAP-Rule" id="MF_01595"/>
    </source>
</evidence>
<evidence type="ECO:0000256" key="2">
    <source>
        <dbReference type="SAM" id="MobiDB-lite"/>
    </source>
</evidence>
<reference key="1">
    <citation type="journal article" date="2009" name="Genome Res.">
        <title>Complete genome of the cellulolytic thermophile Acidothermus cellulolyticus 11B provides insights into its ecophysiological and evolutionary adaptations.</title>
        <authorList>
            <person name="Barabote R.D."/>
            <person name="Xie G."/>
            <person name="Leu D.H."/>
            <person name="Normand P."/>
            <person name="Necsulea A."/>
            <person name="Daubin V."/>
            <person name="Medigue C."/>
            <person name="Adney W.S."/>
            <person name="Xu X.C."/>
            <person name="Lapidus A."/>
            <person name="Parales R.E."/>
            <person name="Detter C."/>
            <person name="Pujic P."/>
            <person name="Bruce D."/>
            <person name="Lavire C."/>
            <person name="Challacombe J.F."/>
            <person name="Brettin T.S."/>
            <person name="Berry A.M."/>
        </authorList>
    </citation>
    <scope>NUCLEOTIDE SEQUENCE [LARGE SCALE GENOMIC DNA]</scope>
    <source>
        <strain>ATCC 43068 / DSM 8971 / 11B</strain>
    </source>
</reference>
<proteinExistence type="inferred from homology"/>
<gene>
    <name evidence="1" type="primary">pnp</name>
    <name type="ordered locus">Acel_1508</name>
</gene>
<keyword id="KW-0963">Cytoplasm</keyword>
<keyword id="KW-0460">Magnesium</keyword>
<keyword id="KW-0479">Metal-binding</keyword>
<keyword id="KW-0548">Nucleotidyltransferase</keyword>
<keyword id="KW-1185">Reference proteome</keyword>
<keyword id="KW-0694">RNA-binding</keyword>
<keyword id="KW-0808">Transferase</keyword>
<dbReference type="EC" id="2.7.7.8" evidence="1"/>
<dbReference type="EMBL" id="CP000481">
    <property type="protein sequence ID" value="ABK53280.1"/>
    <property type="molecule type" value="Genomic_DNA"/>
</dbReference>
<dbReference type="RefSeq" id="WP_011720343.1">
    <property type="nucleotide sequence ID" value="NC_008578.1"/>
</dbReference>
<dbReference type="SMR" id="A0LV20"/>
<dbReference type="FunCoup" id="A0LV20">
    <property type="interactions" value="281"/>
</dbReference>
<dbReference type="STRING" id="351607.Acel_1508"/>
<dbReference type="KEGG" id="ace:Acel_1508"/>
<dbReference type="eggNOG" id="COG1185">
    <property type="taxonomic scope" value="Bacteria"/>
</dbReference>
<dbReference type="HOGENOM" id="CLU_004217_2_2_11"/>
<dbReference type="InParanoid" id="A0LV20"/>
<dbReference type="OrthoDB" id="9804305at2"/>
<dbReference type="Proteomes" id="UP000008221">
    <property type="component" value="Chromosome"/>
</dbReference>
<dbReference type="GO" id="GO:0005829">
    <property type="term" value="C:cytosol"/>
    <property type="evidence" value="ECO:0007669"/>
    <property type="project" value="TreeGrafter"/>
</dbReference>
<dbReference type="GO" id="GO:0000175">
    <property type="term" value="F:3'-5'-RNA exonuclease activity"/>
    <property type="evidence" value="ECO:0007669"/>
    <property type="project" value="TreeGrafter"/>
</dbReference>
<dbReference type="GO" id="GO:0000287">
    <property type="term" value="F:magnesium ion binding"/>
    <property type="evidence" value="ECO:0007669"/>
    <property type="project" value="UniProtKB-UniRule"/>
</dbReference>
<dbReference type="GO" id="GO:0004654">
    <property type="term" value="F:polyribonucleotide nucleotidyltransferase activity"/>
    <property type="evidence" value="ECO:0007669"/>
    <property type="project" value="UniProtKB-UniRule"/>
</dbReference>
<dbReference type="GO" id="GO:0003723">
    <property type="term" value="F:RNA binding"/>
    <property type="evidence" value="ECO:0007669"/>
    <property type="project" value="UniProtKB-UniRule"/>
</dbReference>
<dbReference type="GO" id="GO:0006402">
    <property type="term" value="P:mRNA catabolic process"/>
    <property type="evidence" value="ECO:0007669"/>
    <property type="project" value="UniProtKB-UniRule"/>
</dbReference>
<dbReference type="GO" id="GO:0006396">
    <property type="term" value="P:RNA processing"/>
    <property type="evidence" value="ECO:0007669"/>
    <property type="project" value="InterPro"/>
</dbReference>
<dbReference type="CDD" id="cd02393">
    <property type="entry name" value="KH-I_PNPase"/>
    <property type="match status" value="1"/>
</dbReference>
<dbReference type="CDD" id="cd11364">
    <property type="entry name" value="RNase_PH_PNPase_2"/>
    <property type="match status" value="1"/>
</dbReference>
<dbReference type="CDD" id="cd04472">
    <property type="entry name" value="S1_PNPase"/>
    <property type="match status" value="1"/>
</dbReference>
<dbReference type="FunFam" id="2.40.50.140:FF:000069">
    <property type="entry name" value="Polyribonucleotide nucleotidyltransferase"/>
    <property type="match status" value="1"/>
</dbReference>
<dbReference type="FunFam" id="3.30.1370.10:FF:000001">
    <property type="entry name" value="Polyribonucleotide nucleotidyltransferase"/>
    <property type="match status" value="1"/>
</dbReference>
<dbReference type="FunFam" id="3.30.230.70:FF:000001">
    <property type="entry name" value="Polyribonucleotide nucleotidyltransferase"/>
    <property type="match status" value="1"/>
</dbReference>
<dbReference type="FunFam" id="3.30.230.70:FF:000002">
    <property type="entry name" value="Polyribonucleotide nucleotidyltransferase"/>
    <property type="match status" value="1"/>
</dbReference>
<dbReference type="Gene3D" id="3.30.230.70">
    <property type="entry name" value="GHMP Kinase, N-terminal domain"/>
    <property type="match status" value="2"/>
</dbReference>
<dbReference type="Gene3D" id="3.30.1370.10">
    <property type="entry name" value="K Homology domain, type 1"/>
    <property type="match status" value="1"/>
</dbReference>
<dbReference type="Gene3D" id="2.40.50.140">
    <property type="entry name" value="Nucleic acid-binding proteins"/>
    <property type="match status" value="1"/>
</dbReference>
<dbReference type="HAMAP" id="MF_01595">
    <property type="entry name" value="PNPase"/>
    <property type="match status" value="1"/>
</dbReference>
<dbReference type="InterPro" id="IPR001247">
    <property type="entry name" value="ExoRNase_PH_dom1"/>
</dbReference>
<dbReference type="InterPro" id="IPR015847">
    <property type="entry name" value="ExoRNase_PH_dom2"/>
</dbReference>
<dbReference type="InterPro" id="IPR036345">
    <property type="entry name" value="ExoRNase_PH_dom2_sf"/>
</dbReference>
<dbReference type="InterPro" id="IPR014069">
    <property type="entry name" value="GPSI/PNP"/>
</dbReference>
<dbReference type="InterPro" id="IPR004087">
    <property type="entry name" value="KH_dom"/>
</dbReference>
<dbReference type="InterPro" id="IPR004088">
    <property type="entry name" value="KH_dom_type_1"/>
</dbReference>
<dbReference type="InterPro" id="IPR036612">
    <property type="entry name" value="KH_dom_type_1_sf"/>
</dbReference>
<dbReference type="InterPro" id="IPR012340">
    <property type="entry name" value="NA-bd_OB-fold"/>
</dbReference>
<dbReference type="InterPro" id="IPR012162">
    <property type="entry name" value="PNPase"/>
</dbReference>
<dbReference type="InterPro" id="IPR027408">
    <property type="entry name" value="PNPase/RNase_PH_dom_sf"/>
</dbReference>
<dbReference type="InterPro" id="IPR015848">
    <property type="entry name" value="PNPase_PH_RNA-bd_bac/org-type"/>
</dbReference>
<dbReference type="InterPro" id="IPR036456">
    <property type="entry name" value="PNPase_PH_RNA-bd_sf"/>
</dbReference>
<dbReference type="InterPro" id="IPR020568">
    <property type="entry name" value="Ribosomal_Su5_D2-typ_SF"/>
</dbReference>
<dbReference type="InterPro" id="IPR003029">
    <property type="entry name" value="S1_domain"/>
</dbReference>
<dbReference type="NCBIfam" id="TIGR03591">
    <property type="entry name" value="polynuc_phos"/>
    <property type="match status" value="1"/>
</dbReference>
<dbReference type="NCBIfam" id="TIGR02696">
    <property type="entry name" value="pppGpp_PNP"/>
    <property type="match status" value="1"/>
</dbReference>
<dbReference type="NCBIfam" id="NF008805">
    <property type="entry name" value="PRK11824.1"/>
    <property type="match status" value="1"/>
</dbReference>
<dbReference type="PANTHER" id="PTHR11252">
    <property type="entry name" value="POLYRIBONUCLEOTIDE NUCLEOTIDYLTRANSFERASE"/>
    <property type="match status" value="1"/>
</dbReference>
<dbReference type="PANTHER" id="PTHR11252:SF0">
    <property type="entry name" value="POLYRIBONUCLEOTIDE NUCLEOTIDYLTRANSFERASE 1, MITOCHONDRIAL"/>
    <property type="match status" value="1"/>
</dbReference>
<dbReference type="Pfam" id="PF00013">
    <property type="entry name" value="KH_1"/>
    <property type="match status" value="1"/>
</dbReference>
<dbReference type="Pfam" id="PF03726">
    <property type="entry name" value="PNPase"/>
    <property type="match status" value="1"/>
</dbReference>
<dbReference type="Pfam" id="PF01138">
    <property type="entry name" value="RNase_PH"/>
    <property type="match status" value="2"/>
</dbReference>
<dbReference type="Pfam" id="PF03725">
    <property type="entry name" value="RNase_PH_C"/>
    <property type="match status" value="1"/>
</dbReference>
<dbReference type="Pfam" id="PF00575">
    <property type="entry name" value="S1"/>
    <property type="match status" value="1"/>
</dbReference>
<dbReference type="PIRSF" id="PIRSF005499">
    <property type="entry name" value="PNPase"/>
    <property type="match status" value="1"/>
</dbReference>
<dbReference type="SMART" id="SM00322">
    <property type="entry name" value="KH"/>
    <property type="match status" value="1"/>
</dbReference>
<dbReference type="SMART" id="SM00316">
    <property type="entry name" value="S1"/>
    <property type="match status" value="1"/>
</dbReference>
<dbReference type="SUPFAM" id="SSF54791">
    <property type="entry name" value="Eukaryotic type KH-domain (KH-domain type I)"/>
    <property type="match status" value="1"/>
</dbReference>
<dbReference type="SUPFAM" id="SSF46915">
    <property type="entry name" value="Polynucleotide phosphorylase/guanosine pentaphosphate synthase (PNPase/GPSI), domain 3"/>
    <property type="match status" value="1"/>
</dbReference>
<dbReference type="SUPFAM" id="SSF55666">
    <property type="entry name" value="Ribonuclease PH domain 2-like"/>
    <property type="match status" value="2"/>
</dbReference>
<dbReference type="SUPFAM" id="SSF54211">
    <property type="entry name" value="Ribosomal protein S5 domain 2-like"/>
    <property type="match status" value="2"/>
</dbReference>
<dbReference type="PROSITE" id="PS50084">
    <property type="entry name" value="KH_TYPE_1"/>
    <property type="match status" value="1"/>
</dbReference>
<dbReference type="PROSITE" id="PS50126">
    <property type="entry name" value="S1"/>
    <property type="match status" value="1"/>
</dbReference>
<accession>A0LV20</accession>
<organism>
    <name type="scientific">Acidothermus cellulolyticus (strain ATCC 43068 / DSM 8971 / 11B)</name>
    <dbReference type="NCBI Taxonomy" id="351607"/>
    <lineage>
        <taxon>Bacteria</taxon>
        <taxon>Bacillati</taxon>
        <taxon>Actinomycetota</taxon>
        <taxon>Actinomycetes</taxon>
        <taxon>Acidothermales</taxon>
        <taxon>Acidothermaceae</taxon>
        <taxon>Acidothermus</taxon>
    </lineage>
</organism>
<comment type="function">
    <text evidence="1">Involved in mRNA degradation. Catalyzes the phosphorolysis of single-stranded polyribonucleotides processively in the 3'- to 5'-direction.</text>
</comment>
<comment type="catalytic activity">
    <reaction evidence="1">
        <text>RNA(n+1) + phosphate = RNA(n) + a ribonucleoside 5'-diphosphate</text>
        <dbReference type="Rhea" id="RHEA:22096"/>
        <dbReference type="Rhea" id="RHEA-COMP:14527"/>
        <dbReference type="Rhea" id="RHEA-COMP:17342"/>
        <dbReference type="ChEBI" id="CHEBI:43474"/>
        <dbReference type="ChEBI" id="CHEBI:57930"/>
        <dbReference type="ChEBI" id="CHEBI:140395"/>
        <dbReference type="EC" id="2.7.7.8"/>
    </reaction>
</comment>
<comment type="cofactor">
    <cofactor evidence="1">
        <name>Mg(2+)</name>
        <dbReference type="ChEBI" id="CHEBI:18420"/>
    </cofactor>
</comment>
<comment type="subcellular location">
    <subcellularLocation>
        <location evidence="1">Cytoplasm</location>
    </subcellularLocation>
</comment>
<comment type="similarity">
    <text evidence="1">Belongs to the polyribonucleotide nucleotidyltransferase family.</text>
</comment>
<protein>
    <recommendedName>
        <fullName evidence="1">Polyribonucleotide nucleotidyltransferase</fullName>
        <ecNumber evidence="1">2.7.7.8</ecNumber>
    </recommendedName>
    <alternativeName>
        <fullName evidence="1">Polynucleotide phosphorylase</fullName>
        <shortName evidence="1">PNPase</shortName>
    </alternativeName>
</protein>